<proteinExistence type="inferred from homology"/>
<organism>
    <name type="scientific">Helicobacter pylori (strain P12)</name>
    <dbReference type="NCBI Taxonomy" id="570508"/>
    <lineage>
        <taxon>Bacteria</taxon>
        <taxon>Pseudomonadati</taxon>
        <taxon>Campylobacterota</taxon>
        <taxon>Epsilonproteobacteria</taxon>
        <taxon>Campylobacterales</taxon>
        <taxon>Helicobacteraceae</taxon>
        <taxon>Helicobacter</taxon>
    </lineage>
</organism>
<protein>
    <recommendedName>
        <fullName evidence="1">Polyribonucleotide nucleotidyltransferase</fullName>
        <ecNumber evidence="1">2.7.7.8</ecNumber>
    </recommendedName>
    <alternativeName>
        <fullName evidence="1">Polynucleotide phosphorylase</fullName>
        <shortName evidence="1">PNPase</shortName>
    </alternativeName>
</protein>
<reference key="1">
    <citation type="submission" date="2008-10" db="EMBL/GenBank/DDBJ databases">
        <title>The complete genome sequence of Helicobacter pylori strain P12.</title>
        <authorList>
            <person name="Fischer W."/>
            <person name="Windhager L."/>
            <person name="Karnholz A."/>
            <person name="Zeiller M."/>
            <person name="Zimmer R."/>
            <person name="Haas R."/>
        </authorList>
    </citation>
    <scope>NUCLEOTIDE SEQUENCE [LARGE SCALE GENOMIC DNA]</scope>
    <source>
        <strain>P12</strain>
    </source>
</reference>
<gene>
    <name evidence="1" type="primary">pnp</name>
    <name type="ordered locus">HPP12_1179</name>
</gene>
<keyword id="KW-0963">Cytoplasm</keyword>
<keyword id="KW-0460">Magnesium</keyword>
<keyword id="KW-0479">Metal-binding</keyword>
<keyword id="KW-0548">Nucleotidyltransferase</keyword>
<keyword id="KW-0694">RNA-binding</keyword>
<keyword id="KW-0808">Transferase</keyword>
<comment type="function">
    <text evidence="1">Involved in mRNA degradation. Catalyzes the phosphorolysis of single-stranded polyribonucleotides processively in the 3'- to 5'-direction.</text>
</comment>
<comment type="catalytic activity">
    <reaction evidence="1">
        <text>RNA(n+1) + phosphate = RNA(n) + a ribonucleoside 5'-diphosphate</text>
        <dbReference type="Rhea" id="RHEA:22096"/>
        <dbReference type="Rhea" id="RHEA-COMP:14527"/>
        <dbReference type="Rhea" id="RHEA-COMP:17342"/>
        <dbReference type="ChEBI" id="CHEBI:43474"/>
        <dbReference type="ChEBI" id="CHEBI:57930"/>
        <dbReference type="ChEBI" id="CHEBI:140395"/>
        <dbReference type="EC" id="2.7.7.8"/>
    </reaction>
</comment>
<comment type="cofactor">
    <cofactor evidence="1">
        <name>Mg(2+)</name>
        <dbReference type="ChEBI" id="CHEBI:18420"/>
    </cofactor>
</comment>
<comment type="subcellular location">
    <subcellularLocation>
        <location evidence="1">Cytoplasm</location>
    </subcellularLocation>
</comment>
<comment type="similarity">
    <text evidence="1">Belongs to the polyribonucleotide nucleotidyltransferase family.</text>
</comment>
<name>PNP_HELP2</name>
<sequence>MDFITINSSNKTEEFALKQVAKQATSSLMYRLGKTIILASVCVEREPVSEDFLPLVVQFLEKSYAAGKIPGGFVKREGRAQDFEILTSRLIDRTLRPLFPKDYRYPTQITLMVLSHDIENDLQVSALNAASAALFLAHIAPIKSVSACRIARIDNEFIINPNTSLLNQSSLDLFVSGTKESLNMIEMRSLGQKLNALEEPLMLEALELAQKSLKETCTLYEEVFTPHQNELLFKESQAIVLNERLLDLLTNQYFDEIIKGIESSALSERENVFNEIAKKISEAHSEFSLEEIEWSLEKVKKTEIRRMIIQDKIRPDKRALEEVRPILIESDLLPMAHSSILFTRGQTQSLVVGVLGTDNDAQTHESLEHKTPIKERFMFHYNFPPFCVGEASSIGAASRRELGHGNLAKRALETSIKNKEQVIRLVSEILESNGSSSMASVCAGSLALYASGVEIYDLVAGVAMGMVSEGQDHAILSDISGLEDAEGDMDFKIAGNLEGITAMQMDTKMSGIKLEILYQALLQAKEAREHILKIMHEAKEKIVINFSHLPTTEIFNVAPDKIVEIIGQGGRVIKEIVEKFEVKIDLNKPSGEVKIMGNKERVLKTKEFILNYLHSLDQELEQYAIDEVLEAQVKRIVDFGAFLSLPKGGEGLLRKQNMDRCQVVLKEGDSIKCRVISFNKGKIALDLA</sequence>
<dbReference type="EC" id="2.7.7.8" evidence="1"/>
<dbReference type="EMBL" id="CP001217">
    <property type="protein sequence ID" value="ACJ08331.1"/>
    <property type="molecule type" value="Genomic_DNA"/>
</dbReference>
<dbReference type="SMR" id="B6JN53"/>
<dbReference type="KEGG" id="hpp:HPP12_1179"/>
<dbReference type="HOGENOM" id="CLU_004217_2_2_7"/>
<dbReference type="Proteomes" id="UP000008198">
    <property type="component" value="Chromosome"/>
</dbReference>
<dbReference type="GO" id="GO:0005829">
    <property type="term" value="C:cytosol"/>
    <property type="evidence" value="ECO:0007669"/>
    <property type="project" value="TreeGrafter"/>
</dbReference>
<dbReference type="GO" id="GO:0000175">
    <property type="term" value="F:3'-5'-RNA exonuclease activity"/>
    <property type="evidence" value="ECO:0007669"/>
    <property type="project" value="TreeGrafter"/>
</dbReference>
<dbReference type="GO" id="GO:0000287">
    <property type="term" value="F:magnesium ion binding"/>
    <property type="evidence" value="ECO:0007669"/>
    <property type="project" value="UniProtKB-UniRule"/>
</dbReference>
<dbReference type="GO" id="GO:0004654">
    <property type="term" value="F:polyribonucleotide nucleotidyltransferase activity"/>
    <property type="evidence" value="ECO:0007669"/>
    <property type="project" value="UniProtKB-UniRule"/>
</dbReference>
<dbReference type="GO" id="GO:0003723">
    <property type="term" value="F:RNA binding"/>
    <property type="evidence" value="ECO:0007669"/>
    <property type="project" value="UniProtKB-UniRule"/>
</dbReference>
<dbReference type="GO" id="GO:0006402">
    <property type="term" value="P:mRNA catabolic process"/>
    <property type="evidence" value="ECO:0007669"/>
    <property type="project" value="UniProtKB-UniRule"/>
</dbReference>
<dbReference type="GO" id="GO:0006396">
    <property type="term" value="P:RNA processing"/>
    <property type="evidence" value="ECO:0007669"/>
    <property type="project" value="InterPro"/>
</dbReference>
<dbReference type="CDD" id="cd02393">
    <property type="entry name" value="KH-I_PNPase"/>
    <property type="match status" value="1"/>
</dbReference>
<dbReference type="CDD" id="cd11364">
    <property type="entry name" value="RNase_PH_PNPase_2"/>
    <property type="match status" value="1"/>
</dbReference>
<dbReference type="FunFam" id="3.30.1370.10:FF:000001">
    <property type="entry name" value="Polyribonucleotide nucleotidyltransferase"/>
    <property type="match status" value="1"/>
</dbReference>
<dbReference type="FunFam" id="3.30.230.70:FF:000026">
    <property type="entry name" value="Polyribonucleotide nucleotidyltransferase"/>
    <property type="match status" value="1"/>
</dbReference>
<dbReference type="FunFam" id="3.30.230.70:FF:000029">
    <property type="entry name" value="Polyribonucleotide nucleotidyltransferase"/>
    <property type="match status" value="1"/>
</dbReference>
<dbReference type="Gene3D" id="3.30.230.70">
    <property type="entry name" value="GHMP Kinase, N-terminal domain"/>
    <property type="match status" value="2"/>
</dbReference>
<dbReference type="Gene3D" id="3.30.1370.10">
    <property type="entry name" value="K Homology domain, type 1"/>
    <property type="match status" value="1"/>
</dbReference>
<dbReference type="Gene3D" id="2.40.50.140">
    <property type="entry name" value="Nucleic acid-binding proteins"/>
    <property type="match status" value="1"/>
</dbReference>
<dbReference type="HAMAP" id="MF_01595">
    <property type="entry name" value="PNPase"/>
    <property type="match status" value="1"/>
</dbReference>
<dbReference type="InterPro" id="IPR001247">
    <property type="entry name" value="ExoRNase_PH_dom1"/>
</dbReference>
<dbReference type="InterPro" id="IPR015847">
    <property type="entry name" value="ExoRNase_PH_dom2"/>
</dbReference>
<dbReference type="InterPro" id="IPR036345">
    <property type="entry name" value="ExoRNase_PH_dom2_sf"/>
</dbReference>
<dbReference type="InterPro" id="IPR004087">
    <property type="entry name" value="KH_dom"/>
</dbReference>
<dbReference type="InterPro" id="IPR004088">
    <property type="entry name" value="KH_dom_type_1"/>
</dbReference>
<dbReference type="InterPro" id="IPR036612">
    <property type="entry name" value="KH_dom_type_1_sf"/>
</dbReference>
<dbReference type="InterPro" id="IPR012340">
    <property type="entry name" value="NA-bd_OB-fold"/>
</dbReference>
<dbReference type="InterPro" id="IPR012162">
    <property type="entry name" value="PNPase"/>
</dbReference>
<dbReference type="InterPro" id="IPR027408">
    <property type="entry name" value="PNPase/RNase_PH_dom_sf"/>
</dbReference>
<dbReference type="InterPro" id="IPR036456">
    <property type="entry name" value="PNPase_PH_RNA-bd_sf"/>
</dbReference>
<dbReference type="InterPro" id="IPR020568">
    <property type="entry name" value="Ribosomal_Su5_D2-typ_SF"/>
</dbReference>
<dbReference type="InterPro" id="IPR003029">
    <property type="entry name" value="S1_domain"/>
</dbReference>
<dbReference type="NCBIfam" id="TIGR03591">
    <property type="entry name" value="polynuc_phos"/>
    <property type="match status" value="1"/>
</dbReference>
<dbReference type="NCBIfam" id="NF008805">
    <property type="entry name" value="PRK11824.1"/>
    <property type="match status" value="1"/>
</dbReference>
<dbReference type="PANTHER" id="PTHR11252">
    <property type="entry name" value="POLYRIBONUCLEOTIDE NUCLEOTIDYLTRANSFERASE"/>
    <property type="match status" value="1"/>
</dbReference>
<dbReference type="PANTHER" id="PTHR11252:SF0">
    <property type="entry name" value="POLYRIBONUCLEOTIDE NUCLEOTIDYLTRANSFERASE 1, MITOCHONDRIAL"/>
    <property type="match status" value="1"/>
</dbReference>
<dbReference type="Pfam" id="PF00013">
    <property type="entry name" value="KH_1"/>
    <property type="match status" value="1"/>
</dbReference>
<dbReference type="Pfam" id="PF01138">
    <property type="entry name" value="RNase_PH"/>
    <property type="match status" value="2"/>
</dbReference>
<dbReference type="Pfam" id="PF03725">
    <property type="entry name" value="RNase_PH_C"/>
    <property type="match status" value="2"/>
</dbReference>
<dbReference type="Pfam" id="PF00575">
    <property type="entry name" value="S1"/>
    <property type="match status" value="1"/>
</dbReference>
<dbReference type="PIRSF" id="PIRSF005499">
    <property type="entry name" value="PNPase"/>
    <property type="match status" value="1"/>
</dbReference>
<dbReference type="SMART" id="SM00322">
    <property type="entry name" value="KH"/>
    <property type="match status" value="1"/>
</dbReference>
<dbReference type="SMART" id="SM00316">
    <property type="entry name" value="S1"/>
    <property type="match status" value="1"/>
</dbReference>
<dbReference type="SUPFAM" id="SSF54791">
    <property type="entry name" value="Eukaryotic type KH-domain (KH-domain type I)"/>
    <property type="match status" value="1"/>
</dbReference>
<dbReference type="SUPFAM" id="SSF50249">
    <property type="entry name" value="Nucleic acid-binding proteins"/>
    <property type="match status" value="1"/>
</dbReference>
<dbReference type="SUPFAM" id="SSF46915">
    <property type="entry name" value="Polynucleotide phosphorylase/guanosine pentaphosphate synthase (PNPase/GPSI), domain 3"/>
    <property type="match status" value="1"/>
</dbReference>
<dbReference type="SUPFAM" id="SSF55666">
    <property type="entry name" value="Ribonuclease PH domain 2-like"/>
    <property type="match status" value="2"/>
</dbReference>
<dbReference type="SUPFAM" id="SSF54211">
    <property type="entry name" value="Ribosomal protein S5 domain 2-like"/>
    <property type="match status" value="2"/>
</dbReference>
<dbReference type="PROSITE" id="PS50084">
    <property type="entry name" value="KH_TYPE_1"/>
    <property type="match status" value="1"/>
</dbReference>
<dbReference type="PROSITE" id="PS50126">
    <property type="entry name" value="S1"/>
    <property type="match status" value="1"/>
</dbReference>
<feature type="chain" id="PRO_0000381902" description="Polyribonucleotide nucleotidyltransferase">
    <location>
        <begin position="1"/>
        <end position="688"/>
    </location>
</feature>
<feature type="domain" description="KH" evidence="1">
    <location>
        <begin position="550"/>
        <end position="609"/>
    </location>
</feature>
<feature type="domain" description="S1 motif" evidence="1">
    <location>
        <begin position="626"/>
        <end position="688"/>
    </location>
</feature>
<feature type="binding site" evidence="1">
    <location>
        <position position="484"/>
    </location>
    <ligand>
        <name>Mg(2+)</name>
        <dbReference type="ChEBI" id="CHEBI:18420"/>
    </ligand>
</feature>
<feature type="binding site" evidence="1">
    <location>
        <position position="490"/>
    </location>
    <ligand>
        <name>Mg(2+)</name>
        <dbReference type="ChEBI" id="CHEBI:18420"/>
    </ligand>
</feature>
<evidence type="ECO:0000255" key="1">
    <source>
        <dbReference type="HAMAP-Rule" id="MF_01595"/>
    </source>
</evidence>
<accession>B6JN53</accession>